<dbReference type="EMBL" id="AJ854042">
    <property type="protein sequence ID" value="CAH69404.1"/>
    <property type="molecule type" value="Genomic_DNA"/>
</dbReference>
<dbReference type="RefSeq" id="YP_001496942.1">
    <property type="nucleotide sequence ID" value="NC_009884.1"/>
</dbReference>
<dbReference type="SMR" id="Q573F2"/>
<dbReference type="KEGG" id="vg:5656078"/>
<dbReference type="Proteomes" id="UP000006364">
    <property type="component" value="Genome"/>
</dbReference>
<feature type="chain" id="PRO_0000384491" description="Uncharacterized protein ORF67b">
    <location>
        <begin position="1"/>
        <end position="67"/>
    </location>
</feature>
<organism>
    <name type="scientific">Acidianus filamentous virus 2 (isolate Italy/Pozzuoli)</name>
    <name type="common">AFV-2</name>
    <dbReference type="NCBI Taxonomy" id="654910"/>
    <lineage>
        <taxon>Viruses</taxon>
        <taxon>Adnaviria</taxon>
        <taxon>Zilligvirae</taxon>
        <taxon>Taleaviricota</taxon>
        <taxon>Tokiviricetes</taxon>
        <taxon>Ligamenvirales</taxon>
        <taxon>Lipothrixviridae</taxon>
        <taxon>Deltalipothrixvirus</taxon>
        <taxon>Acidianus filamentous virus 2</taxon>
    </lineage>
</organism>
<proteinExistence type="predicted"/>
<gene>
    <name type="ORF">ORF67b</name>
</gene>
<sequence length="67" mass="8048">MSMSYSLLIHKTRKWGHKFFKFIFKSYIGSTMKSLINKVKRYSFYEKNLVIISNLSRKNVYGVIFND</sequence>
<protein>
    <recommendedName>
        <fullName>Uncharacterized protein ORF67b</fullName>
    </recommendedName>
</protein>
<name>Y067B_AFV2P</name>
<keyword id="KW-1185">Reference proteome</keyword>
<reference key="1">
    <citation type="journal article" date="2005" name="J. Bacteriol.">
        <title>Structure and genome organization of AFV2, a novel archaeal lipothrixvirus with unusual terminal and core structures.</title>
        <authorList>
            <person name="Haring M."/>
            <person name="Vestergaard G."/>
            <person name="Brugger K."/>
            <person name="Rachel R."/>
            <person name="Garrett R.A."/>
            <person name="Prangishvili D."/>
        </authorList>
    </citation>
    <scope>NUCLEOTIDE SEQUENCE [GENOMIC DNA]</scope>
</reference>
<accession>Q573F2</accession>
<organismHost>
    <name type="scientific">Acidianus sp. F28</name>
    <dbReference type="NCBI Taxonomy" id="315458"/>
</organismHost>